<keyword id="KW-0238">DNA-binding</keyword>
<keyword id="KW-0489">Methyltransferase</keyword>
<keyword id="KW-0680">Restriction system</keyword>
<keyword id="KW-0949">S-adenosyl-L-methionine</keyword>
<keyword id="KW-0808">Transferase</keyword>
<accession>Q9LAI2</accession>
<reference key="1">
    <citation type="journal article" date="2000" name="J. Bacteriol.">
        <title>Cloning, expression, and purification of a thermostable nonhomodimeric restriction enzyme, BslI.</title>
        <authorList>
            <person name="Hsieh P.-C."/>
            <person name="Xiao J.-P."/>
            <person name="O'Loane D."/>
            <person name="Xu S.-Y."/>
        </authorList>
    </citation>
    <scope>NUCLEOTIDE SEQUENCE [GENOMIC DNA]</scope>
    <scope>FUNCTION</scope>
    <scope>MUTAGENESIS OF 1-MET--ILE-17</scope>
</reference>
<reference key="2">
    <citation type="journal article" date="2003" name="Nucleic Acids Res.">
        <title>A nomenclature for restriction enzymes, DNA methyltransferases, homing endonucleases and their genes.</title>
        <authorList>
            <person name="Roberts R.J."/>
            <person name="Belfort M."/>
            <person name="Bestor T."/>
            <person name="Bhagwat A.S."/>
            <person name="Bickle T.A."/>
            <person name="Bitinaite J."/>
            <person name="Blumenthal R.M."/>
            <person name="Degtyarev S.K."/>
            <person name="Dryden D.T."/>
            <person name="Dybvig K."/>
            <person name="Firman K."/>
            <person name="Gromova E.S."/>
            <person name="Gumport R.I."/>
            <person name="Halford S.E."/>
            <person name="Hattman S."/>
            <person name="Heitman J."/>
            <person name="Hornby D.P."/>
            <person name="Janulaitis A."/>
            <person name="Jeltsch A."/>
            <person name="Josephsen J."/>
            <person name="Kiss A."/>
            <person name="Klaenhammer T.R."/>
            <person name="Kobayashi I."/>
            <person name="Kong H."/>
            <person name="Krueger D.H."/>
            <person name="Lacks S."/>
            <person name="Marinus M.G."/>
            <person name="Miyahara M."/>
            <person name="Morgan R.D."/>
            <person name="Murray N.E."/>
            <person name="Nagaraja V."/>
            <person name="Piekarowicz A."/>
            <person name="Pingoud A."/>
            <person name="Raleigh E."/>
            <person name="Rao D.N."/>
            <person name="Reich N."/>
            <person name="Repin V.E."/>
            <person name="Selker E.U."/>
            <person name="Shaw P.C."/>
            <person name="Stein D.C."/>
            <person name="Stoddard B.L."/>
            <person name="Szybalski W."/>
            <person name="Trautner T.A."/>
            <person name="Van Etten J.L."/>
            <person name="Vitor J.M."/>
            <person name="Wilson G.G."/>
            <person name="Xu S.Y."/>
        </authorList>
    </citation>
    <scope>NOMENCLATURE</scope>
</reference>
<organism>
    <name type="scientific">Bacillus sp. (strain NEB-606)</name>
    <dbReference type="NCBI Taxonomy" id="114630"/>
    <lineage>
        <taxon>Bacteria</taxon>
        <taxon>Bacillati</taxon>
        <taxon>Bacillota</taxon>
        <taxon>Bacilli</taxon>
        <taxon>Bacillales</taxon>
        <taxon>Bacillaceae</taxon>
        <taxon>Bacillus</taxon>
    </lineage>
</organism>
<proteinExistence type="evidence at protein level"/>
<sequence>MNWIFNTLIQFLEDLNIDPSVVSLIDEDAKKLEEQFPKALKHPVVDEEIVYKILCEKYNLNALNVKTISETLNKEYKFGRNSKTALKKYLDYGKEEYLIQFFNTLMLENNTYIDREYIESVLAFCEPVSKEKIKNEFIKLWNEANEVNEYGKLKDYLLGIYSKLFSMGLENLRLIEIYNSNESLIKKVFKYESTIKELKEYCLSNQESITAGLAIKMFNEKYMELMKKEYQQDAIALKLEEHMNQLYVDNNINEYPYIFDRGNDILLLPTEEYDFVYFHIDQDFFNRFQDENKFLDYVLSSIKQIYRVLANEKVFALKIDNIYNNEKNLKWELYPKLTIYSEHFIQTKETARFYKAYDIAKDLLSKHEFRLLENDSEKNRENILKEYFSGKISEDELFSLVHVNMKKEHFFEFLNRFKYVHYGFTFNDCLVLDRVDKSFANGELENVISNATEILLIFYKFRADQRRIPCPSCGSLNISGNSYPEINNRSWECKSPYCPDRSKSNRGKRYSKKSNYMQWGAIYPKSHDIIPRELIKKWRRDIIVINNEQEIFEMLVKYFSFTDEKLLFINTNELPSVVTERENRKVVILSQKLKEKAYTSNVVVKESLEGEIEFFKNGLYLKNFTELYLPEDQRRVSPEINNFLNSGGRLKLIQGDSYEVLKSVEDNTFAAAVTSPPYYNAREYSQWPNLYLYFNDMYNIIKECFRTLKPGSVFLYNIADIVDNENIIVKSSMGNKRIPLGAYTIYFFQKAGFELLDNIIWDKGEPQSNRQKNDGKFTPHYQKPLNAYEHMFIFKKTGAPLTLSDDWQSKRGSWIKNIVPFQPVFKINSKGENILGHTAPFPEDIPRFVANVFTKHDNDIILDPFSGSLTSAIASYKSNRIGLGIELSPDYVELSRDRALLEGVTTKILNFN</sequence>
<evidence type="ECO:0000269" key="1">
    <source>
    </source>
</evidence>
<evidence type="ECO:0000303" key="2">
    <source>
    </source>
</evidence>
<evidence type="ECO:0000303" key="3">
    <source>
    </source>
</evidence>
<evidence type="ECO:0000305" key="4"/>
<feature type="chain" id="PRO_0000087922" description="Type II beta methyltransferase M.BslI">
    <location>
        <begin position="1"/>
        <end position="912"/>
    </location>
</feature>
<feature type="mutagenesis site" description="Partial loss of methylase activity." evidence="1">
    <location>
        <begin position="1"/>
        <end position="17"/>
    </location>
</feature>
<gene>
    <name type="primary">bslIM</name>
</gene>
<protein>
    <recommendedName>
        <fullName evidence="3">Type II beta methyltransferase M.BslI</fullName>
        <shortName evidence="2">M.BslI</shortName>
        <ecNumber>2.1.1.113</ecNumber>
    </recommendedName>
    <alternativeName>
        <fullName>Modification methylase BslI</fullName>
    </alternativeName>
    <alternativeName>
        <fullName>N(4)- cytosine-specific methyltransferase BslI</fullName>
    </alternativeName>
</protein>
<comment type="function">
    <text evidence="1 3">A beta subtype methylase (PubMed:10648519). Recognizes the double-stranded sequence 5'-CCN(7)GG-3', methylates C-2 on both strands, and protects the DNA from cleavage by the BslI endonuclease (PubMed:12654995).</text>
</comment>
<comment type="catalytic activity">
    <reaction>
        <text>a 2'-deoxycytidine in DNA + S-adenosyl-L-methionine = an N(4)-methyl-2'-deoxycytidine in DNA + S-adenosyl-L-homocysteine + H(+)</text>
        <dbReference type="Rhea" id="RHEA:16857"/>
        <dbReference type="Rhea" id="RHEA-COMP:11369"/>
        <dbReference type="Rhea" id="RHEA-COMP:13674"/>
        <dbReference type="ChEBI" id="CHEBI:15378"/>
        <dbReference type="ChEBI" id="CHEBI:57856"/>
        <dbReference type="ChEBI" id="CHEBI:59789"/>
        <dbReference type="ChEBI" id="CHEBI:85452"/>
        <dbReference type="ChEBI" id="CHEBI:137933"/>
        <dbReference type="EC" id="2.1.1.113"/>
    </reaction>
</comment>
<comment type="similarity">
    <text evidence="4">Belongs to the N(4)/N(6)-methyltransferase family. N(4) subfamily.</text>
</comment>
<name>MTB1_BACSQ</name>
<dbReference type="EC" id="2.1.1.113"/>
<dbReference type="EMBL" id="AF135191">
    <property type="protein sequence ID" value="AAF32529.1"/>
    <property type="molecule type" value="Genomic_DNA"/>
</dbReference>
<dbReference type="SMR" id="Q9LAI2"/>
<dbReference type="REBASE" id="3310">
    <property type="entry name" value="M.BslI"/>
</dbReference>
<dbReference type="PRO" id="PR:Q9LAI2"/>
<dbReference type="GO" id="GO:0003677">
    <property type="term" value="F:DNA binding"/>
    <property type="evidence" value="ECO:0007669"/>
    <property type="project" value="UniProtKB-KW"/>
</dbReference>
<dbReference type="GO" id="GO:0008170">
    <property type="term" value="F:N-methyltransferase activity"/>
    <property type="evidence" value="ECO:0007669"/>
    <property type="project" value="InterPro"/>
</dbReference>
<dbReference type="GO" id="GO:0015667">
    <property type="term" value="F:site-specific DNA-methyltransferase (cytosine-N4-specific) activity"/>
    <property type="evidence" value="ECO:0007669"/>
    <property type="project" value="UniProtKB-EC"/>
</dbReference>
<dbReference type="GO" id="GO:0009307">
    <property type="term" value="P:DNA restriction-modification system"/>
    <property type="evidence" value="ECO:0007669"/>
    <property type="project" value="UniProtKB-KW"/>
</dbReference>
<dbReference type="GO" id="GO:0032259">
    <property type="term" value="P:methylation"/>
    <property type="evidence" value="ECO:0007669"/>
    <property type="project" value="UniProtKB-KW"/>
</dbReference>
<dbReference type="Gene3D" id="3.40.50.150">
    <property type="entry name" value="Vaccinia Virus protein VP39"/>
    <property type="match status" value="1"/>
</dbReference>
<dbReference type="InterPro" id="IPR002941">
    <property type="entry name" value="DNA_methylase_N4/N6"/>
</dbReference>
<dbReference type="InterPro" id="IPR017985">
    <property type="entry name" value="MeTrfase_CN4_CS"/>
</dbReference>
<dbReference type="InterPro" id="IPR001091">
    <property type="entry name" value="RM_Methyltransferase"/>
</dbReference>
<dbReference type="InterPro" id="IPR029063">
    <property type="entry name" value="SAM-dependent_MTases_sf"/>
</dbReference>
<dbReference type="Pfam" id="PF01555">
    <property type="entry name" value="N6_N4_Mtase"/>
    <property type="match status" value="1"/>
</dbReference>
<dbReference type="PRINTS" id="PR00508">
    <property type="entry name" value="S21N4MTFRASE"/>
</dbReference>
<dbReference type="SUPFAM" id="SSF53335">
    <property type="entry name" value="S-adenosyl-L-methionine-dependent methyltransferases"/>
    <property type="match status" value="1"/>
</dbReference>
<dbReference type="PROSITE" id="PS00093">
    <property type="entry name" value="N4_MTASE"/>
    <property type="match status" value="1"/>
</dbReference>